<comment type="function">
    <text evidence="2">Monomer: shows cytolytic activity.</text>
</comment>
<comment type="function">
    <text evidence="2">Heterodimer: has no cytolytic activity, but retains most of the alpha-cobratoxin capacity to compete with alpha-bungarotoxin for binding to Torpedo and alpha-7/CHRNA7 nicotinic acetylcholine receptors (nAChRs) as well as to Lymnea stagnalis acetylcholine-binding protein.</text>
</comment>
<comment type="subunit">
    <text evidence="2">Monomer, or heterodimer with alpha-cobratoxin (AC P01391); disulfide-linked.</text>
</comment>
<comment type="subcellular location">
    <subcellularLocation>
        <location evidence="3 4">Secreted</location>
    </subcellularLocation>
    <subcellularLocation>
        <location evidence="1">Target cell membrane</location>
    </subcellularLocation>
</comment>
<comment type="tissue specificity">
    <text evidence="8">Expressed by the venom gland.</text>
</comment>
<comment type="mass spectrometry" mass="6737.0" method="MALDI" evidence="3"/>
<comment type="toxic dose">
    <text evidence="4">LD(50) is 1.2 mg/kg by intravenous injection.</text>
</comment>
<comment type="miscellaneous">
    <text evidence="7">Is classified as a S-type cytotoxin, since a serine residue stands at position 28 (Ser-29 in standard classification).</text>
</comment>
<comment type="similarity">
    <text evidence="7">Belongs to the three-finger toxin family. Short-chain subfamily. Type IA cytotoxin sub-subfamily.</text>
</comment>
<feature type="chain" id="PRO_0000093499" description="Cytotoxin 2" evidence="4">
    <location>
        <begin position="1"/>
        <end position="60"/>
    </location>
</feature>
<feature type="disulfide bond" evidence="3 9">
    <location>
        <begin position="3"/>
        <end position="21"/>
    </location>
</feature>
<feature type="disulfide bond" evidence="3 9">
    <location>
        <begin position="14"/>
        <end position="38"/>
    </location>
</feature>
<feature type="disulfide bond" evidence="3 9">
    <location>
        <begin position="42"/>
        <end position="53"/>
    </location>
</feature>
<feature type="disulfide bond" evidence="3 9">
    <location>
        <begin position="54"/>
        <end position="59"/>
    </location>
</feature>
<feature type="strand" evidence="10">
    <location>
        <begin position="2"/>
        <end position="4"/>
    </location>
</feature>
<feature type="strand" evidence="10">
    <location>
        <begin position="11"/>
        <end position="13"/>
    </location>
</feature>
<feature type="strand" evidence="10">
    <location>
        <begin position="20"/>
        <end position="26"/>
    </location>
</feature>
<feature type="strand" evidence="10">
    <location>
        <begin position="29"/>
        <end position="41"/>
    </location>
</feature>
<feature type="strand" evidence="10">
    <location>
        <begin position="47"/>
        <end position="56"/>
    </location>
</feature>
<dbReference type="PIR" id="A01712">
    <property type="entry name" value="H3NJ2K"/>
</dbReference>
<dbReference type="PDB" id="7O2K">
    <property type="method" value="NMR"/>
    <property type="chains" value="A=1-60"/>
</dbReference>
<dbReference type="PDBsum" id="7O2K"/>
<dbReference type="BMRB" id="P01445"/>
<dbReference type="SMR" id="P01445"/>
<dbReference type="GO" id="GO:0005576">
    <property type="term" value="C:extracellular region"/>
    <property type="evidence" value="ECO:0007669"/>
    <property type="project" value="UniProtKB-SubCell"/>
</dbReference>
<dbReference type="GO" id="GO:0016020">
    <property type="term" value="C:membrane"/>
    <property type="evidence" value="ECO:0007669"/>
    <property type="project" value="UniProtKB-KW"/>
</dbReference>
<dbReference type="GO" id="GO:0044218">
    <property type="term" value="C:other organism cell membrane"/>
    <property type="evidence" value="ECO:0007669"/>
    <property type="project" value="UniProtKB-KW"/>
</dbReference>
<dbReference type="GO" id="GO:0090729">
    <property type="term" value="F:toxin activity"/>
    <property type="evidence" value="ECO:0007669"/>
    <property type="project" value="UniProtKB-KW"/>
</dbReference>
<dbReference type="GO" id="GO:0031640">
    <property type="term" value="P:killing of cells of another organism"/>
    <property type="evidence" value="ECO:0007669"/>
    <property type="project" value="UniProtKB-KW"/>
</dbReference>
<dbReference type="CDD" id="cd00206">
    <property type="entry name" value="TFP_snake_toxin"/>
    <property type="match status" value="1"/>
</dbReference>
<dbReference type="FunFam" id="2.10.60.10:FF:000024">
    <property type="entry name" value="Cytotoxin 1"/>
    <property type="match status" value="1"/>
</dbReference>
<dbReference type="Gene3D" id="2.10.60.10">
    <property type="entry name" value="CD59"/>
    <property type="match status" value="1"/>
</dbReference>
<dbReference type="InterPro" id="IPR003572">
    <property type="entry name" value="Cytotoxin_Cobra"/>
</dbReference>
<dbReference type="InterPro" id="IPR003571">
    <property type="entry name" value="Snake_3FTx"/>
</dbReference>
<dbReference type="InterPro" id="IPR045860">
    <property type="entry name" value="Snake_toxin-like_sf"/>
</dbReference>
<dbReference type="InterPro" id="IPR018354">
    <property type="entry name" value="Snake_toxin_con_site"/>
</dbReference>
<dbReference type="InterPro" id="IPR054131">
    <property type="entry name" value="Toxin_cobra-type"/>
</dbReference>
<dbReference type="Pfam" id="PF21947">
    <property type="entry name" value="Toxin_cobra-type"/>
    <property type="match status" value="1"/>
</dbReference>
<dbReference type="PRINTS" id="PR00282">
    <property type="entry name" value="CYTOTOXIN"/>
</dbReference>
<dbReference type="SUPFAM" id="SSF57302">
    <property type="entry name" value="Snake toxin-like"/>
    <property type="match status" value="1"/>
</dbReference>
<dbReference type="PROSITE" id="PS00272">
    <property type="entry name" value="SNAKE_TOXIN"/>
    <property type="match status" value="1"/>
</dbReference>
<evidence type="ECO:0000250" key="1">
    <source>
        <dbReference type="UniProtKB" id="P60301"/>
    </source>
</evidence>
<evidence type="ECO:0000269" key="2">
    <source>
    </source>
</evidence>
<evidence type="ECO:0000269" key="3">
    <source>
    </source>
</evidence>
<evidence type="ECO:0000269" key="4">
    <source>
    </source>
</evidence>
<evidence type="ECO:0000303" key="5">
    <source>
    </source>
</evidence>
<evidence type="ECO:0000303" key="6">
    <source>
    </source>
</evidence>
<evidence type="ECO:0000305" key="7"/>
<evidence type="ECO:0000305" key="8">
    <source>
    </source>
</evidence>
<evidence type="ECO:0007744" key="9">
    <source>
        <dbReference type="PDB" id="7O2K"/>
    </source>
</evidence>
<evidence type="ECO:0007829" key="10">
    <source>
        <dbReference type="PDB" id="7O2K"/>
    </source>
</evidence>
<keyword id="KW-0002">3D-structure</keyword>
<keyword id="KW-0123">Cardiotoxin</keyword>
<keyword id="KW-0204">Cytolysis</keyword>
<keyword id="KW-0903">Direct protein sequencing</keyword>
<keyword id="KW-1015">Disulfide bond</keyword>
<keyword id="KW-0472">Membrane</keyword>
<keyword id="KW-0964">Secreted</keyword>
<keyword id="KW-1052">Target cell membrane</keyword>
<keyword id="KW-1053">Target membrane</keyword>
<keyword id="KW-0800">Toxin</keyword>
<name>3SA7A_NAJKA</name>
<proteinExistence type="evidence at protein level"/>
<sequence length="60" mass="6745">LKCNKLIPLAYKTCPAGKNLCYKMFMVSNKTVPVKRGCIDVCPKNSLLVKYVCCNTDRCN</sequence>
<protein>
    <recommendedName>
        <fullName evidence="5">Cytotoxin 2</fullName>
        <shortName evidence="5">CX2</shortName>
    </recommendedName>
    <alternativeName>
        <fullName evidence="6">Toxin CM-7A</fullName>
    </alternativeName>
</protein>
<reference key="1">
    <citation type="journal article" date="1980" name="Toxicon">
        <title>The complete primary structures of three cytotoxins (CM-6, CM-7 and CM-7A) from Naja naja kaouthia (Siamese cobra) snake venom.</title>
        <authorList>
            <person name="Joubert F.J."/>
            <person name="Taljaard N."/>
        </authorList>
    </citation>
    <scope>PROTEIN SEQUENCE</scope>
    <scope>SUBCELLULAR LOCATION</scope>
    <scope>TOXIC DOSE</scope>
    <source>
        <tissue>Venom</tissue>
    </source>
</reference>
<reference key="2">
    <citation type="journal article" date="2008" name="J. Biol. Chem.">
        <title>Naturally occurring disulfide-bound dimers of three-fingered toxins: a paradigm for biological activity diversification.</title>
        <authorList>
            <person name="Osipov A.V."/>
            <person name="Kasheverov I.E."/>
            <person name="Makarova Y.V."/>
            <person name="Starkov V.G."/>
            <person name="Vorontsova O.V."/>
            <person name="Ziganshin R.K."/>
            <person name="Andreeva T.V."/>
            <person name="Serebryakova M.V."/>
            <person name="Benoit A."/>
            <person name="Hogg R.C."/>
            <person name="Bertrand D."/>
            <person name="Tsetlin V.I."/>
            <person name="Utkin Y.N."/>
        </authorList>
    </citation>
    <scope>PROTEIN SEQUENCE OF 6-17; 23-36 AND 45-50</scope>
    <scope>IDENTIFICATION BY MASS SPECTROMETRY</scope>
    <scope>FUNCTION</scope>
    <scope>SUBUNIT</scope>
    <source>
        <tissue>Venom</tissue>
    </source>
</reference>
<reference evidence="9" key="3">
    <citation type="journal article" date="2021" name="Biochem. Biophys. Res. Commun.">
        <title>The omega-loop of cobra cytotoxins tolerates multiple amino acid substitutions.</title>
        <authorList>
            <person name="Dubinnyi M.A."/>
            <person name="Dubovskii P.V."/>
            <person name="Starkov V.G."/>
            <person name="Utkin Y.N."/>
        </authorList>
    </citation>
    <scope>STRUCTURE BY NMR</scope>
    <scope>MASS SPECTROMETRY</scope>
    <scope>SUBCELLULAR LOCATION</scope>
    <scope>TISSUE SPECIFICITY</scope>
    <scope>DISULFIDE BONDS</scope>
</reference>
<accession>P01445</accession>
<organism>
    <name type="scientific">Naja kaouthia</name>
    <name type="common">Monocled cobra</name>
    <name type="synonym">Naja siamensis</name>
    <dbReference type="NCBI Taxonomy" id="8649"/>
    <lineage>
        <taxon>Eukaryota</taxon>
        <taxon>Metazoa</taxon>
        <taxon>Chordata</taxon>
        <taxon>Craniata</taxon>
        <taxon>Vertebrata</taxon>
        <taxon>Euteleostomi</taxon>
        <taxon>Lepidosauria</taxon>
        <taxon>Squamata</taxon>
        <taxon>Bifurcata</taxon>
        <taxon>Unidentata</taxon>
        <taxon>Episquamata</taxon>
        <taxon>Toxicofera</taxon>
        <taxon>Serpentes</taxon>
        <taxon>Colubroidea</taxon>
        <taxon>Elapidae</taxon>
        <taxon>Elapinae</taxon>
        <taxon>Naja</taxon>
    </lineage>
</organism>